<organism>
    <name type="scientific">Shewanella halifaxensis (strain HAW-EB4)</name>
    <dbReference type="NCBI Taxonomy" id="458817"/>
    <lineage>
        <taxon>Bacteria</taxon>
        <taxon>Pseudomonadati</taxon>
        <taxon>Pseudomonadota</taxon>
        <taxon>Gammaproteobacteria</taxon>
        <taxon>Alteromonadales</taxon>
        <taxon>Shewanellaceae</taxon>
        <taxon>Shewanella</taxon>
    </lineage>
</organism>
<comment type="function">
    <text evidence="1">The UvrABC repair system catalyzes the recognition and processing of DNA lesions. UvrC both incises the 5' and 3' sides of the lesion. The N-terminal half is responsible for the 3' incision and the C-terminal half is responsible for the 5' incision.</text>
</comment>
<comment type="subunit">
    <text evidence="1">Interacts with UvrB in an incision complex.</text>
</comment>
<comment type="subcellular location">
    <subcellularLocation>
        <location evidence="1">Cytoplasm</location>
    </subcellularLocation>
</comment>
<comment type="similarity">
    <text evidence="1">Belongs to the UvrC family.</text>
</comment>
<feature type="chain" id="PRO_1000077837" description="UvrABC system protein C">
    <location>
        <begin position="1"/>
        <end position="609"/>
    </location>
</feature>
<feature type="domain" description="GIY-YIG" evidence="1">
    <location>
        <begin position="16"/>
        <end position="94"/>
    </location>
</feature>
<feature type="domain" description="UVR" evidence="1">
    <location>
        <begin position="203"/>
        <end position="238"/>
    </location>
</feature>
<protein>
    <recommendedName>
        <fullName evidence="1">UvrABC system protein C</fullName>
        <shortName evidence="1">Protein UvrC</shortName>
    </recommendedName>
    <alternativeName>
        <fullName evidence="1">Excinuclease ABC subunit C</fullName>
    </alternativeName>
</protein>
<sequence length="609" mass="68555">MSDVFNANQFLKTVTSSPGVYRMYDAKAVVIYVGKAKDLKKRLSSYFRKNLTNVKTQALVSHIANIDVTVTHSETDALILENDYIKQYMPKYNVLLRDDKSYPYILLSNHKHPRLAYHRGPKRDKGLYFGPYPNGGAVRESLHLLQKIFPIRQCDDLYYKSRSRPCLQYQIGRCSAPCVGKVSLEDYQEQVRLATLFLKGKDHQVMSVLVGKMEQAASDMRYEQAALYRDQITALRRVSEQQEVSNASGDMDVIGAYYASGVACFHLLFIREGKIFGSRSYYPKVPVNTEVSEVLRSFMLQFYLNSDSQRLTPKEILISEPFEEQDELAKAIQAAQNKKVEIKTQVRGERASFLRLALTNATNAVNTRLSHKNTIEQRFLLLEEAIESTNKIQRMECFDISHTMGESTVASCVVFNREGPSKADYRRYNITGITPGDDYAAMKQAITRRFDKISSSGKIPDILFIDGGIGQLRIAQKVVDEKFVALDNAPTLIGVAKGEGRKPGLETLIYGENEESFTLPADSGALHLIQHIRDESHRFAITGHRNKRQKTRNTSTLESIAGVGPKRRKALLQYLGGLQEVKGASVSELVKVPGISLEMAQTIHDALRG</sequence>
<name>UVRC_SHEHH</name>
<proteinExistence type="inferred from homology"/>
<accession>B0TIW9</accession>
<reference key="1">
    <citation type="submission" date="2008-01" db="EMBL/GenBank/DDBJ databases">
        <title>Complete sequence of Shewanella halifaxensis HAW-EB4.</title>
        <authorList>
            <consortium name="US DOE Joint Genome Institute"/>
            <person name="Copeland A."/>
            <person name="Lucas S."/>
            <person name="Lapidus A."/>
            <person name="Glavina del Rio T."/>
            <person name="Dalin E."/>
            <person name="Tice H."/>
            <person name="Bruce D."/>
            <person name="Goodwin L."/>
            <person name="Pitluck S."/>
            <person name="Sims D."/>
            <person name="Brettin T."/>
            <person name="Detter J.C."/>
            <person name="Han C."/>
            <person name="Kuske C.R."/>
            <person name="Schmutz J."/>
            <person name="Larimer F."/>
            <person name="Land M."/>
            <person name="Hauser L."/>
            <person name="Kyrpides N."/>
            <person name="Kim E."/>
            <person name="Zhao J.-S."/>
            <person name="Richardson P."/>
        </authorList>
    </citation>
    <scope>NUCLEOTIDE SEQUENCE [LARGE SCALE GENOMIC DNA]</scope>
    <source>
        <strain>HAW-EB4</strain>
    </source>
</reference>
<keyword id="KW-0963">Cytoplasm</keyword>
<keyword id="KW-0227">DNA damage</keyword>
<keyword id="KW-0228">DNA excision</keyword>
<keyword id="KW-0234">DNA repair</keyword>
<keyword id="KW-0267">Excision nuclease</keyword>
<keyword id="KW-0742">SOS response</keyword>
<dbReference type="EMBL" id="CP000931">
    <property type="protein sequence ID" value="ABZ76904.1"/>
    <property type="molecule type" value="Genomic_DNA"/>
</dbReference>
<dbReference type="RefSeq" id="WP_012277433.1">
    <property type="nucleotide sequence ID" value="NC_010334.1"/>
</dbReference>
<dbReference type="SMR" id="B0TIW9"/>
<dbReference type="STRING" id="458817.Shal_2345"/>
<dbReference type="KEGG" id="shl:Shal_2345"/>
<dbReference type="eggNOG" id="COG0322">
    <property type="taxonomic scope" value="Bacteria"/>
</dbReference>
<dbReference type="HOGENOM" id="CLU_014841_3_0_6"/>
<dbReference type="OrthoDB" id="9804933at2"/>
<dbReference type="Proteomes" id="UP000001317">
    <property type="component" value="Chromosome"/>
</dbReference>
<dbReference type="GO" id="GO:0005737">
    <property type="term" value="C:cytoplasm"/>
    <property type="evidence" value="ECO:0007669"/>
    <property type="project" value="UniProtKB-SubCell"/>
</dbReference>
<dbReference type="GO" id="GO:0009380">
    <property type="term" value="C:excinuclease repair complex"/>
    <property type="evidence" value="ECO:0007669"/>
    <property type="project" value="InterPro"/>
</dbReference>
<dbReference type="GO" id="GO:0003677">
    <property type="term" value="F:DNA binding"/>
    <property type="evidence" value="ECO:0007669"/>
    <property type="project" value="UniProtKB-UniRule"/>
</dbReference>
<dbReference type="GO" id="GO:0009381">
    <property type="term" value="F:excinuclease ABC activity"/>
    <property type="evidence" value="ECO:0007669"/>
    <property type="project" value="UniProtKB-UniRule"/>
</dbReference>
<dbReference type="GO" id="GO:0006289">
    <property type="term" value="P:nucleotide-excision repair"/>
    <property type="evidence" value="ECO:0007669"/>
    <property type="project" value="UniProtKB-UniRule"/>
</dbReference>
<dbReference type="GO" id="GO:0009432">
    <property type="term" value="P:SOS response"/>
    <property type="evidence" value="ECO:0007669"/>
    <property type="project" value="UniProtKB-UniRule"/>
</dbReference>
<dbReference type="CDD" id="cd10434">
    <property type="entry name" value="GIY-YIG_UvrC_Cho"/>
    <property type="match status" value="1"/>
</dbReference>
<dbReference type="FunFam" id="1.10.150.20:FF:000005">
    <property type="entry name" value="UvrABC system protein C"/>
    <property type="match status" value="1"/>
</dbReference>
<dbReference type="FunFam" id="3.30.420.340:FF:000001">
    <property type="entry name" value="UvrABC system protein C"/>
    <property type="match status" value="1"/>
</dbReference>
<dbReference type="FunFam" id="3.40.1440.10:FF:000001">
    <property type="entry name" value="UvrABC system protein C"/>
    <property type="match status" value="1"/>
</dbReference>
<dbReference type="Gene3D" id="1.10.150.20">
    <property type="entry name" value="5' to 3' exonuclease, C-terminal subdomain"/>
    <property type="match status" value="1"/>
</dbReference>
<dbReference type="Gene3D" id="3.40.1440.10">
    <property type="entry name" value="GIY-YIG endonuclease"/>
    <property type="match status" value="1"/>
</dbReference>
<dbReference type="Gene3D" id="4.10.860.10">
    <property type="entry name" value="UVR domain"/>
    <property type="match status" value="1"/>
</dbReference>
<dbReference type="Gene3D" id="3.30.420.340">
    <property type="entry name" value="UvrC, RNAse H endonuclease domain"/>
    <property type="match status" value="1"/>
</dbReference>
<dbReference type="HAMAP" id="MF_00203">
    <property type="entry name" value="UvrC"/>
    <property type="match status" value="1"/>
</dbReference>
<dbReference type="InterPro" id="IPR000305">
    <property type="entry name" value="GIY-YIG_endonuc"/>
</dbReference>
<dbReference type="InterPro" id="IPR035901">
    <property type="entry name" value="GIY-YIG_endonuc_sf"/>
</dbReference>
<dbReference type="InterPro" id="IPR047296">
    <property type="entry name" value="GIY-YIG_UvrC_Cho"/>
</dbReference>
<dbReference type="InterPro" id="IPR003583">
    <property type="entry name" value="Hlx-hairpin-Hlx_DNA-bd_motif"/>
</dbReference>
<dbReference type="InterPro" id="IPR010994">
    <property type="entry name" value="RuvA_2-like"/>
</dbReference>
<dbReference type="InterPro" id="IPR001943">
    <property type="entry name" value="UVR_dom"/>
</dbReference>
<dbReference type="InterPro" id="IPR036876">
    <property type="entry name" value="UVR_dom_sf"/>
</dbReference>
<dbReference type="InterPro" id="IPR050066">
    <property type="entry name" value="UvrABC_protein_C"/>
</dbReference>
<dbReference type="InterPro" id="IPR004791">
    <property type="entry name" value="UvrC"/>
</dbReference>
<dbReference type="InterPro" id="IPR001162">
    <property type="entry name" value="UvrC_RNase_H_dom"/>
</dbReference>
<dbReference type="InterPro" id="IPR038476">
    <property type="entry name" value="UvrC_RNase_H_dom_sf"/>
</dbReference>
<dbReference type="NCBIfam" id="NF001824">
    <property type="entry name" value="PRK00558.1-5"/>
    <property type="match status" value="1"/>
</dbReference>
<dbReference type="NCBIfam" id="TIGR00194">
    <property type="entry name" value="uvrC"/>
    <property type="match status" value="1"/>
</dbReference>
<dbReference type="PANTHER" id="PTHR30562:SF1">
    <property type="entry name" value="UVRABC SYSTEM PROTEIN C"/>
    <property type="match status" value="1"/>
</dbReference>
<dbReference type="PANTHER" id="PTHR30562">
    <property type="entry name" value="UVRC/OXIDOREDUCTASE"/>
    <property type="match status" value="1"/>
</dbReference>
<dbReference type="Pfam" id="PF01541">
    <property type="entry name" value="GIY-YIG"/>
    <property type="match status" value="1"/>
</dbReference>
<dbReference type="Pfam" id="PF14520">
    <property type="entry name" value="HHH_5"/>
    <property type="match status" value="1"/>
</dbReference>
<dbReference type="Pfam" id="PF02151">
    <property type="entry name" value="UVR"/>
    <property type="match status" value="1"/>
</dbReference>
<dbReference type="Pfam" id="PF22920">
    <property type="entry name" value="UvrC_RNaseH"/>
    <property type="match status" value="1"/>
</dbReference>
<dbReference type="Pfam" id="PF08459">
    <property type="entry name" value="UvrC_RNaseH_dom"/>
    <property type="match status" value="1"/>
</dbReference>
<dbReference type="SMART" id="SM00465">
    <property type="entry name" value="GIYc"/>
    <property type="match status" value="1"/>
</dbReference>
<dbReference type="SMART" id="SM00278">
    <property type="entry name" value="HhH1"/>
    <property type="match status" value="2"/>
</dbReference>
<dbReference type="SUPFAM" id="SSF46600">
    <property type="entry name" value="C-terminal UvrC-binding domain of UvrB"/>
    <property type="match status" value="1"/>
</dbReference>
<dbReference type="SUPFAM" id="SSF82771">
    <property type="entry name" value="GIY-YIG endonuclease"/>
    <property type="match status" value="1"/>
</dbReference>
<dbReference type="SUPFAM" id="SSF47781">
    <property type="entry name" value="RuvA domain 2-like"/>
    <property type="match status" value="1"/>
</dbReference>
<dbReference type="PROSITE" id="PS50164">
    <property type="entry name" value="GIY_YIG"/>
    <property type="match status" value="1"/>
</dbReference>
<dbReference type="PROSITE" id="PS50151">
    <property type="entry name" value="UVR"/>
    <property type="match status" value="1"/>
</dbReference>
<dbReference type="PROSITE" id="PS50165">
    <property type="entry name" value="UVRC"/>
    <property type="match status" value="1"/>
</dbReference>
<gene>
    <name evidence="1" type="primary">uvrC</name>
    <name type="ordered locus">Shal_2345</name>
</gene>
<evidence type="ECO:0000255" key="1">
    <source>
        <dbReference type="HAMAP-Rule" id="MF_00203"/>
    </source>
</evidence>